<sequence>MRRIQSIARSPIAIALFMSLAVAGCASKKNLPNNAGDLGLGAGAATPGSSQDFTVNVGDRIFFDLDSSLIRADAQQTLSKQAQWLQRYPQYSITIEGHADERGTREYNLALGQRRAAATRDFLASRGVPTNRMRTISYGNERPVAVCDADTCWSQNRRAVTVLNGAGR</sequence>
<reference key="1">
    <citation type="journal article" date="1994" name="Infect. Immun.">
        <title>Molecular cloning, nucleotide sequence, and occurrence of a 16.5-kilodalton outer membrane protein of Brucella abortus with similarity to pal lipoproteins.</title>
        <authorList>
            <person name="Tibor A."/>
            <person name="Weynants V."/>
            <person name="Denoel P."/>
            <person name="Lichtfouse B."/>
            <person name="De Bolle X."/>
            <person name="Saman E."/>
            <person name="Limet J.N."/>
            <person name="Letesson J.-J."/>
        </authorList>
    </citation>
    <scope>NUCLEOTIDE SEQUENCE [GENOMIC DNA]</scope>
    <scope>PROTEIN SEQUENCE OF 53-58</scope>
    <source>
        <strain>544 / Biovar 1</strain>
    </source>
</reference>
<reference key="2">
    <citation type="journal article" date="2005" name="J. Bacteriol.">
        <title>Completion of the genome sequence of Brucella abortus and comparison to the highly similar genomes of Brucella melitensis and Brucella suis.</title>
        <authorList>
            <person name="Halling S.M."/>
            <person name="Peterson-Burch B.D."/>
            <person name="Bricker B.J."/>
            <person name="Zuerner R.L."/>
            <person name="Qing Z."/>
            <person name="Li L.-L."/>
            <person name="Kapur V."/>
            <person name="Alt D.P."/>
            <person name="Olsen S.C."/>
        </authorList>
    </citation>
    <scope>NUCLEOTIDE SEQUENCE [LARGE SCALE GENOMIC DNA]</scope>
    <source>
        <strain>9-941</strain>
    </source>
</reference>
<reference key="3">
    <citation type="journal article" date="1999" name="Infect. Immun.">
        <title>Outer membrane proteins Omp10, Omp16, and Omp19 of Brucella spp. are lipoproteins.</title>
        <authorList>
            <person name="Tibor A."/>
            <person name="Decelle B."/>
            <person name="Letesson J.-J."/>
        </authorList>
    </citation>
    <scope>CHARACTERIZATION</scope>
</reference>
<gene>
    <name evidence="1" type="primary">pal</name>
    <name type="synonym">omp16</name>
    <name type="ordered locus">BruAb1_1680</name>
</gene>
<name>PAL_BRUAB</name>
<keyword id="KW-0131">Cell cycle</keyword>
<keyword id="KW-0132">Cell division</keyword>
<keyword id="KW-0998">Cell outer membrane</keyword>
<keyword id="KW-0903">Direct protein sequencing</keyword>
<keyword id="KW-0449">Lipoprotein</keyword>
<keyword id="KW-0472">Membrane</keyword>
<keyword id="KW-0564">Palmitate</keyword>
<keyword id="KW-0732">Signal</keyword>
<accession>P0A3S9</accession>
<accession>Q44662</accession>
<accession>Q57BI5</accession>
<proteinExistence type="evidence at protein level"/>
<evidence type="ECO:0000255" key="1">
    <source>
        <dbReference type="HAMAP-Rule" id="MF_02204"/>
    </source>
</evidence>
<evidence type="ECO:0000305" key="2"/>
<organism>
    <name type="scientific">Brucella abortus biovar 1 (strain 9-941)</name>
    <dbReference type="NCBI Taxonomy" id="262698"/>
    <lineage>
        <taxon>Bacteria</taxon>
        <taxon>Pseudomonadati</taxon>
        <taxon>Pseudomonadota</taxon>
        <taxon>Alphaproteobacteria</taxon>
        <taxon>Hyphomicrobiales</taxon>
        <taxon>Brucellaceae</taxon>
        <taxon>Brucella/Ochrobactrum group</taxon>
        <taxon>Brucella</taxon>
    </lineage>
</organism>
<dbReference type="EMBL" id="L27996">
    <property type="protein sequence ID" value="AAA59360.1"/>
    <property type="molecule type" value="Genomic_DNA"/>
</dbReference>
<dbReference type="EMBL" id="AE017223">
    <property type="protein sequence ID" value="AAX74999.1"/>
    <property type="molecule type" value="Genomic_DNA"/>
</dbReference>
<dbReference type="PIR" id="I40346">
    <property type="entry name" value="I40346"/>
</dbReference>
<dbReference type="RefSeq" id="WP_002966947.1">
    <property type="nucleotide sequence ID" value="NC_006932.1"/>
</dbReference>
<dbReference type="SMR" id="P0A3S9"/>
<dbReference type="EnsemblBacteria" id="AAX74999">
    <property type="protein sequence ID" value="AAX74999"/>
    <property type="gene ID" value="BruAb1_1680"/>
</dbReference>
<dbReference type="GeneID" id="97533150"/>
<dbReference type="KEGG" id="bmb:BruAb1_1680"/>
<dbReference type="HOGENOM" id="CLU_016890_9_2_5"/>
<dbReference type="Proteomes" id="UP000000540">
    <property type="component" value="Chromosome I"/>
</dbReference>
<dbReference type="GO" id="GO:0009279">
    <property type="term" value="C:cell outer membrane"/>
    <property type="evidence" value="ECO:0007669"/>
    <property type="project" value="UniProtKB-SubCell"/>
</dbReference>
<dbReference type="GO" id="GO:0051301">
    <property type="term" value="P:cell division"/>
    <property type="evidence" value="ECO:0007669"/>
    <property type="project" value="UniProtKB-UniRule"/>
</dbReference>
<dbReference type="CDD" id="cd07185">
    <property type="entry name" value="OmpA_C-like"/>
    <property type="match status" value="1"/>
</dbReference>
<dbReference type="Gene3D" id="3.30.1330.60">
    <property type="entry name" value="OmpA-like domain"/>
    <property type="match status" value="1"/>
</dbReference>
<dbReference type="HAMAP" id="MF_02204">
    <property type="entry name" value="Pal"/>
    <property type="match status" value="1"/>
</dbReference>
<dbReference type="InterPro" id="IPR050330">
    <property type="entry name" value="Bact_OuterMem_StrucFunc"/>
</dbReference>
<dbReference type="InterPro" id="IPR006664">
    <property type="entry name" value="OMP_bac"/>
</dbReference>
<dbReference type="InterPro" id="IPR006665">
    <property type="entry name" value="OmpA-like"/>
</dbReference>
<dbReference type="InterPro" id="IPR006690">
    <property type="entry name" value="OMPA-like_CS"/>
</dbReference>
<dbReference type="InterPro" id="IPR036737">
    <property type="entry name" value="OmpA-like_sf"/>
</dbReference>
<dbReference type="InterPro" id="IPR039001">
    <property type="entry name" value="Pal"/>
</dbReference>
<dbReference type="InterPro" id="IPR014169">
    <property type="entry name" value="Pal_lipo_C"/>
</dbReference>
<dbReference type="NCBIfam" id="TIGR02802">
    <property type="entry name" value="Pal_lipo"/>
    <property type="match status" value="1"/>
</dbReference>
<dbReference type="PANTHER" id="PTHR30329:SF21">
    <property type="entry name" value="LIPOPROTEIN YIAD-RELATED"/>
    <property type="match status" value="1"/>
</dbReference>
<dbReference type="PANTHER" id="PTHR30329">
    <property type="entry name" value="STATOR ELEMENT OF FLAGELLAR MOTOR COMPLEX"/>
    <property type="match status" value="1"/>
</dbReference>
<dbReference type="Pfam" id="PF00691">
    <property type="entry name" value="OmpA"/>
    <property type="match status" value="1"/>
</dbReference>
<dbReference type="PRINTS" id="PR01021">
    <property type="entry name" value="OMPADOMAIN"/>
</dbReference>
<dbReference type="SUPFAM" id="SSF103088">
    <property type="entry name" value="OmpA-like"/>
    <property type="match status" value="1"/>
</dbReference>
<dbReference type="PROSITE" id="PS01068">
    <property type="entry name" value="OMPA_1"/>
    <property type="match status" value="1"/>
</dbReference>
<dbReference type="PROSITE" id="PS51123">
    <property type="entry name" value="OMPA_2"/>
    <property type="match status" value="1"/>
</dbReference>
<dbReference type="PROSITE" id="PS51257">
    <property type="entry name" value="PROKAR_LIPOPROTEIN"/>
    <property type="match status" value="1"/>
</dbReference>
<feature type="signal peptide" evidence="1 2">
    <location>
        <begin position="1"/>
        <end position="24"/>
    </location>
</feature>
<feature type="chain" id="PRO_0000020128" description="Peptidoglycan-associated lipoprotein" evidence="1">
    <location>
        <begin position="25"/>
        <end position="168"/>
    </location>
</feature>
<feature type="domain" description="OmpA-like" evidence="1">
    <location>
        <begin position="51"/>
        <end position="167"/>
    </location>
</feature>
<feature type="lipid moiety-binding region" description="N-palmitoyl cysteine" evidence="1">
    <location>
        <position position="25"/>
    </location>
</feature>
<feature type="lipid moiety-binding region" description="S-diacylglycerol cysteine" evidence="1">
    <location>
        <position position="25"/>
    </location>
</feature>
<protein>
    <recommendedName>
        <fullName evidence="1">Peptidoglycan-associated lipoprotein</fullName>
        <shortName evidence="1">PAL</shortName>
    </recommendedName>
    <alternativeName>
        <fullName>16.5 kDa minor OMP</fullName>
        <shortName>16 kDa OMP</shortName>
    </alternativeName>
    <alternativeName>
        <fullName>Minor outer membrane protein Omp16</fullName>
    </alternativeName>
    <alternativeName>
        <fullName>Outer membrane lipoprotein Omp16</fullName>
    </alternativeName>
</protein>
<comment type="function">
    <text evidence="1">Part of the Tol-Pal system, which plays a role in outer membrane invagination during cell division and is important for maintaining outer membrane integrity.</text>
</comment>
<comment type="subunit">
    <text evidence="1">The Tol-Pal system is composed of five core proteins: the inner membrane proteins TolA, TolQ and TolR, the periplasmic protein TolB and the outer membrane protein Pal. They form a network linking the inner and outer membranes and the peptidoglycan layer.</text>
</comment>
<comment type="subcellular location">
    <subcellularLocation>
        <location evidence="1">Cell outer membrane</location>
        <topology evidence="1">Lipid-anchor</topology>
    </subcellularLocation>
</comment>
<comment type="PTM">
    <text>The N-terminus is blocked.</text>
</comment>
<comment type="similarity">
    <text evidence="1">Belongs to the Pal lipoprotein family.</text>
</comment>